<accession>Q9M156</accession>
<accession>O04622</accession>
<organism>
    <name type="scientific">Arabidopsis thaliana</name>
    <name type="common">Mouse-ear cress</name>
    <dbReference type="NCBI Taxonomy" id="3702"/>
    <lineage>
        <taxon>Eukaryota</taxon>
        <taxon>Viridiplantae</taxon>
        <taxon>Streptophyta</taxon>
        <taxon>Embryophyta</taxon>
        <taxon>Tracheophyta</taxon>
        <taxon>Spermatophyta</taxon>
        <taxon>Magnoliopsida</taxon>
        <taxon>eudicotyledons</taxon>
        <taxon>Gunneridae</taxon>
        <taxon>Pentapetalae</taxon>
        <taxon>rosids</taxon>
        <taxon>malvids</taxon>
        <taxon>Brassicales</taxon>
        <taxon>Brassicaceae</taxon>
        <taxon>Camelineae</taxon>
        <taxon>Arabidopsis</taxon>
    </lineage>
</organism>
<gene>
    <name type="primary">UGT72B1</name>
    <name type="ordered locus">At4g01070</name>
    <name type="ORF">F2N1.15</name>
</gene>
<feature type="chain" id="PRO_0000074160" description="UDP-glycosyltransferase 72B1">
    <location>
        <begin position="1"/>
        <end position="480"/>
    </location>
</feature>
<feature type="active site" description="Proton acceptor" evidence="1">
    <location>
        <position position="19"/>
    </location>
</feature>
<feature type="active site" description="Charge relay" evidence="1">
    <location>
        <position position="117"/>
    </location>
</feature>
<feature type="binding site" evidence="4 8 9">
    <location>
        <position position="277"/>
    </location>
    <ligand>
        <name>UDP</name>
        <dbReference type="ChEBI" id="CHEBI:58223"/>
    </ligand>
</feature>
<feature type="binding site" evidence="6 7">
    <location>
        <position position="277"/>
    </location>
    <ligand>
        <name>UDP-alpha-D-glucose</name>
        <dbReference type="ChEBI" id="CHEBI:58885"/>
    </ligand>
</feature>
<feature type="binding site" evidence="4 8 9">
    <location>
        <position position="346"/>
    </location>
    <ligand>
        <name>UDP</name>
        <dbReference type="ChEBI" id="CHEBI:58223"/>
    </ligand>
</feature>
<feature type="binding site" evidence="6 7">
    <location>
        <position position="346"/>
    </location>
    <ligand>
        <name>UDP-alpha-D-glucose</name>
        <dbReference type="ChEBI" id="CHEBI:58885"/>
    </ligand>
</feature>
<feature type="binding site" evidence="4 8 9">
    <location>
        <position position="347"/>
    </location>
    <ligand>
        <name>UDP</name>
        <dbReference type="ChEBI" id="CHEBI:58223"/>
    </ligand>
</feature>
<feature type="binding site" evidence="6 7">
    <location>
        <position position="347"/>
    </location>
    <ligand>
        <name>UDP-alpha-D-glucose</name>
        <dbReference type="ChEBI" id="CHEBI:58885"/>
    </ligand>
</feature>
<feature type="binding site" evidence="4 8 9">
    <location>
        <position position="364"/>
    </location>
    <ligand>
        <name>UDP</name>
        <dbReference type="ChEBI" id="CHEBI:58223"/>
    </ligand>
</feature>
<feature type="binding site" evidence="6 7">
    <location>
        <position position="364"/>
    </location>
    <ligand>
        <name>UDP-alpha-D-glucose</name>
        <dbReference type="ChEBI" id="CHEBI:58885"/>
    </ligand>
</feature>
<feature type="binding site" evidence="6 7">
    <location>
        <position position="367"/>
    </location>
    <ligand>
        <name>UDP-alpha-D-glucose</name>
        <dbReference type="ChEBI" id="CHEBI:58885"/>
    </ligand>
</feature>
<feature type="binding site" evidence="4 8 9">
    <location>
        <position position="368"/>
    </location>
    <ligand>
        <name>UDP</name>
        <dbReference type="ChEBI" id="CHEBI:58223"/>
    </ligand>
</feature>
<feature type="binding site" evidence="6 7">
    <location>
        <position position="368"/>
    </location>
    <ligand>
        <name>UDP-alpha-D-glucose</name>
        <dbReference type="ChEBI" id="CHEBI:58885"/>
    </ligand>
</feature>
<feature type="binding site" evidence="4 8 9">
    <location>
        <position position="369"/>
    </location>
    <ligand>
        <name>UDP</name>
        <dbReference type="ChEBI" id="CHEBI:58223"/>
    </ligand>
</feature>
<feature type="binding site" evidence="6 7">
    <location>
        <position position="369"/>
    </location>
    <ligand>
        <name>UDP-alpha-D-glucose</name>
        <dbReference type="ChEBI" id="CHEBI:58885"/>
    </ligand>
</feature>
<feature type="binding site" evidence="4 8 9">
    <location>
        <position position="372"/>
    </location>
    <ligand>
        <name>UDP</name>
        <dbReference type="ChEBI" id="CHEBI:58223"/>
    </ligand>
</feature>
<feature type="binding site" evidence="6 7">
    <location>
        <position position="372"/>
    </location>
    <ligand>
        <name>UDP-alpha-D-glucose</name>
        <dbReference type="ChEBI" id="CHEBI:58885"/>
    </ligand>
</feature>
<feature type="binding site" evidence="4 8 9">
    <location>
        <position position="386"/>
    </location>
    <ligand>
        <name>UDP</name>
        <dbReference type="ChEBI" id="CHEBI:58223"/>
    </ligand>
</feature>
<feature type="binding site" evidence="6 7">
    <location>
        <position position="386"/>
    </location>
    <ligand>
        <name>UDP-alpha-D-glucose</name>
        <dbReference type="ChEBI" id="CHEBI:58885"/>
    </ligand>
</feature>
<feature type="binding site" evidence="6 7">
    <location>
        <position position="388"/>
    </location>
    <ligand>
        <name>UDP-alpha-D-glucose</name>
        <dbReference type="ChEBI" id="CHEBI:58885"/>
    </ligand>
</feature>
<feature type="binding site" evidence="6 7">
    <location>
        <position position="389"/>
    </location>
    <ligand>
        <name>UDP-alpha-D-glucose</name>
        <dbReference type="ChEBI" id="CHEBI:58885"/>
    </ligand>
</feature>
<feature type="mutagenesis site" description="Loss of activity." evidence="4">
    <original>S</original>
    <variation>A</variation>
    <location>
        <position position="14"/>
    </location>
</feature>
<feature type="mutagenesis site" description="Loss of activity." evidence="4">
    <original>H</original>
    <variation>A</variation>
    <location>
        <position position="19"/>
    </location>
</feature>
<feature type="mutagenesis site" description="Reduces N-glycosyltransferase activity. Loss of O-glycosyltransferase activity." evidence="4">
    <original>H</original>
    <variation>Q</variation>
    <location>
        <position position="19"/>
    </location>
</feature>
<feature type="mutagenesis site" description="Loss of activity." evidence="4">
    <original>D</original>
    <variation>A</variation>
    <location>
        <position position="117"/>
    </location>
</feature>
<feature type="mutagenesis site" description="Decreases activity. Loss of N-glycosyltransferase activity; when associated with F-315." evidence="4">
    <original>N</original>
    <variation>D</variation>
    <location>
        <position position="312"/>
    </location>
</feature>
<feature type="mutagenesis site" description="Decreases activity. Loss of N-glycosyltransferase activity; when associated with D-312." evidence="4">
    <original>Y</original>
    <variation>F</variation>
    <location>
        <position position="315"/>
    </location>
</feature>
<feature type="strand" evidence="10">
    <location>
        <begin position="8"/>
        <end position="12"/>
    </location>
</feature>
<feature type="helix" evidence="10">
    <location>
        <begin position="17"/>
        <end position="34"/>
    </location>
</feature>
<feature type="strand" evidence="10">
    <location>
        <begin position="37"/>
        <end position="42"/>
    </location>
</feature>
<feature type="strand" evidence="10">
    <location>
        <begin position="45"/>
        <end position="47"/>
    </location>
</feature>
<feature type="helix" evidence="10">
    <location>
        <begin position="52"/>
        <end position="56"/>
    </location>
</feature>
<feature type="strand" evidence="10">
    <location>
        <begin position="63"/>
        <end position="67"/>
    </location>
</feature>
<feature type="helix" evidence="10">
    <location>
        <begin position="82"/>
        <end position="91"/>
    </location>
</feature>
<feature type="helix" evidence="10">
    <location>
        <begin position="94"/>
        <end position="106"/>
    </location>
</feature>
<feature type="strand" evidence="10">
    <location>
        <begin position="112"/>
        <end position="116"/>
    </location>
</feature>
<feature type="helix" evidence="10">
    <location>
        <begin position="121"/>
        <end position="123"/>
    </location>
</feature>
<feature type="helix" evidence="10">
    <location>
        <begin position="124"/>
        <end position="129"/>
    </location>
</feature>
<feature type="strand" evidence="10">
    <location>
        <begin position="134"/>
        <end position="138"/>
    </location>
</feature>
<feature type="helix" evidence="10">
    <location>
        <begin position="142"/>
        <end position="157"/>
    </location>
</feature>
<feature type="helix" evidence="10">
    <location>
        <begin position="162"/>
        <end position="164"/>
    </location>
</feature>
<feature type="helix" evidence="10">
    <location>
        <begin position="179"/>
        <end position="181"/>
    </location>
</feature>
<feature type="helix" evidence="10">
    <location>
        <begin position="184"/>
        <end position="186"/>
    </location>
</feature>
<feature type="helix" evidence="10">
    <location>
        <begin position="192"/>
        <end position="203"/>
    </location>
</feature>
<feature type="helix" evidence="10">
    <location>
        <begin position="204"/>
        <end position="206"/>
    </location>
</feature>
<feature type="strand" evidence="10">
    <location>
        <begin position="208"/>
        <end position="213"/>
    </location>
</feature>
<feature type="turn" evidence="10">
    <location>
        <begin position="216"/>
        <end position="218"/>
    </location>
</feature>
<feature type="helix" evidence="10">
    <location>
        <begin position="220"/>
        <end position="227"/>
    </location>
</feature>
<feature type="strand" evidence="10">
    <location>
        <begin position="236"/>
        <end position="238"/>
    </location>
</feature>
<feature type="helix" evidence="10">
    <location>
        <begin position="257"/>
        <end position="263"/>
    </location>
</feature>
<feature type="strand" evidence="10">
    <location>
        <begin position="270"/>
        <end position="274"/>
    </location>
</feature>
<feature type="turn" evidence="10">
    <location>
        <begin position="276"/>
        <end position="278"/>
    </location>
</feature>
<feature type="helix" evidence="10">
    <location>
        <begin position="283"/>
        <end position="295"/>
    </location>
</feature>
<feature type="strand" evidence="10">
    <location>
        <begin position="299"/>
        <end position="304"/>
    </location>
</feature>
<feature type="turn" evidence="10">
    <location>
        <begin position="311"/>
        <end position="316"/>
    </location>
</feature>
<feature type="helix" evidence="10">
    <location>
        <begin position="324"/>
        <end position="327"/>
    </location>
</feature>
<feature type="helix" evidence="10">
    <location>
        <begin position="332"/>
        <end position="335"/>
    </location>
</feature>
<feature type="turn" evidence="10">
    <location>
        <begin position="336"/>
        <end position="339"/>
    </location>
</feature>
<feature type="strand" evidence="10">
    <location>
        <begin position="340"/>
        <end position="345"/>
    </location>
</feature>
<feature type="helix" evidence="10">
    <location>
        <begin position="349"/>
        <end position="354"/>
    </location>
</feature>
<feature type="strand" evidence="10">
    <location>
        <begin position="358"/>
        <end position="363"/>
    </location>
</feature>
<feature type="helix" evidence="10">
    <location>
        <begin position="367"/>
        <end position="376"/>
    </location>
</feature>
<feature type="strand" evidence="10">
    <location>
        <begin position="380"/>
        <end position="382"/>
    </location>
</feature>
<feature type="helix" evidence="10">
    <location>
        <begin position="389"/>
        <end position="398"/>
    </location>
</feature>
<feature type="helix" evidence="10">
    <location>
        <begin position="416"/>
        <end position="427"/>
    </location>
</feature>
<feature type="helix" evidence="10">
    <location>
        <begin position="431"/>
        <end position="449"/>
    </location>
</feature>
<feature type="helix" evidence="10">
    <location>
        <begin position="455"/>
        <end position="475"/>
    </location>
</feature>
<reference key="1">
    <citation type="journal article" date="1999" name="Nature">
        <title>Sequence and analysis of chromosome 4 of the plant Arabidopsis thaliana.</title>
        <authorList>
            <person name="Mayer K.F.X."/>
            <person name="Schueller C."/>
            <person name="Wambutt R."/>
            <person name="Murphy G."/>
            <person name="Volckaert G."/>
            <person name="Pohl T."/>
            <person name="Duesterhoeft A."/>
            <person name="Stiekema W."/>
            <person name="Entian K.-D."/>
            <person name="Terryn N."/>
            <person name="Harris B."/>
            <person name="Ansorge W."/>
            <person name="Brandt P."/>
            <person name="Grivell L.A."/>
            <person name="Rieger M."/>
            <person name="Weichselgartner M."/>
            <person name="de Simone V."/>
            <person name="Obermaier B."/>
            <person name="Mache R."/>
            <person name="Mueller M."/>
            <person name="Kreis M."/>
            <person name="Delseny M."/>
            <person name="Puigdomenech P."/>
            <person name="Watson M."/>
            <person name="Schmidtheini T."/>
            <person name="Reichert B."/>
            <person name="Portetelle D."/>
            <person name="Perez-Alonso M."/>
            <person name="Boutry M."/>
            <person name="Bancroft I."/>
            <person name="Vos P."/>
            <person name="Hoheisel J."/>
            <person name="Zimmermann W."/>
            <person name="Wedler H."/>
            <person name="Ridley P."/>
            <person name="Langham S.-A."/>
            <person name="McCullagh B."/>
            <person name="Bilham L."/>
            <person name="Robben J."/>
            <person name="van der Schueren J."/>
            <person name="Grymonprez B."/>
            <person name="Chuang Y.-J."/>
            <person name="Vandenbussche F."/>
            <person name="Braeken M."/>
            <person name="Weltjens I."/>
            <person name="Voet M."/>
            <person name="Bastiaens I."/>
            <person name="Aert R."/>
            <person name="Defoor E."/>
            <person name="Weitzenegger T."/>
            <person name="Bothe G."/>
            <person name="Ramsperger U."/>
            <person name="Hilbert H."/>
            <person name="Braun M."/>
            <person name="Holzer E."/>
            <person name="Brandt A."/>
            <person name="Peters S."/>
            <person name="van Staveren M."/>
            <person name="Dirkse W."/>
            <person name="Mooijman P."/>
            <person name="Klein Lankhorst R."/>
            <person name="Rose M."/>
            <person name="Hauf J."/>
            <person name="Koetter P."/>
            <person name="Berneiser S."/>
            <person name="Hempel S."/>
            <person name="Feldpausch M."/>
            <person name="Lamberth S."/>
            <person name="Van den Daele H."/>
            <person name="De Keyser A."/>
            <person name="Buysshaert C."/>
            <person name="Gielen J."/>
            <person name="Villarroel R."/>
            <person name="De Clercq R."/>
            <person name="van Montagu M."/>
            <person name="Rogers J."/>
            <person name="Cronin A."/>
            <person name="Quail M.A."/>
            <person name="Bray-Allen S."/>
            <person name="Clark L."/>
            <person name="Doggett J."/>
            <person name="Hall S."/>
            <person name="Kay M."/>
            <person name="Lennard N."/>
            <person name="McLay K."/>
            <person name="Mayes R."/>
            <person name="Pettett A."/>
            <person name="Rajandream M.A."/>
            <person name="Lyne M."/>
            <person name="Benes V."/>
            <person name="Rechmann S."/>
            <person name="Borkova D."/>
            <person name="Bloecker H."/>
            <person name="Scharfe M."/>
            <person name="Grimm M."/>
            <person name="Loehnert T.-H."/>
            <person name="Dose S."/>
            <person name="de Haan M."/>
            <person name="Maarse A.C."/>
            <person name="Schaefer M."/>
            <person name="Mueller-Auer S."/>
            <person name="Gabel C."/>
            <person name="Fuchs M."/>
            <person name="Fartmann B."/>
            <person name="Granderath K."/>
            <person name="Dauner D."/>
            <person name="Herzl A."/>
            <person name="Neumann S."/>
            <person name="Argiriou A."/>
            <person name="Vitale D."/>
            <person name="Liguori R."/>
            <person name="Piravandi E."/>
            <person name="Massenet O."/>
            <person name="Quigley F."/>
            <person name="Clabauld G."/>
            <person name="Muendlein A."/>
            <person name="Felber R."/>
            <person name="Schnabl S."/>
            <person name="Hiller R."/>
            <person name="Schmidt W."/>
            <person name="Lecharny A."/>
            <person name="Aubourg S."/>
            <person name="Chefdor F."/>
            <person name="Cooke R."/>
            <person name="Berger C."/>
            <person name="Monfort A."/>
            <person name="Casacuberta E."/>
            <person name="Gibbons T."/>
            <person name="Weber N."/>
            <person name="Vandenbol M."/>
            <person name="Bargues M."/>
            <person name="Terol J."/>
            <person name="Torres A."/>
            <person name="Perez-Perez A."/>
            <person name="Purnelle B."/>
            <person name="Bent E."/>
            <person name="Johnson S."/>
            <person name="Tacon D."/>
            <person name="Jesse T."/>
            <person name="Heijnen L."/>
            <person name="Schwarz S."/>
            <person name="Scholler P."/>
            <person name="Heber S."/>
            <person name="Francs P."/>
            <person name="Bielke C."/>
            <person name="Frishman D."/>
            <person name="Haase D."/>
            <person name="Lemcke K."/>
            <person name="Mewes H.-W."/>
            <person name="Stocker S."/>
            <person name="Zaccaria P."/>
            <person name="Bevan M."/>
            <person name="Wilson R.K."/>
            <person name="de la Bastide M."/>
            <person name="Habermann K."/>
            <person name="Parnell L."/>
            <person name="Dedhia N."/>
            <person name="Gnoj L."/>
            <person name="Schutz K."/>
            <person name="Huang E."/>
            <person name="Spiegel L."/>
            <person name="Sekhon M."/>
            <person name="Murray J."/>
            <person name="Sheet P."/>
            <person name="Cordes M."/>
            <person name="Abu-Threideh J."/>
            <person name="Stoneking T."/>
            <person name="Kalicki J."/>
            <person name="Graves T."/>
            <person name="Harmon G."/>
            <person name="Edwards J."/>
            <person name="Latreille P."/>
            <person name="Courtney L."/>
            <person name="Cloud J."/>
            <person name="Abbott A."/>
            <person name="Scott K."/>
            <person name="Johnson D."/>
            <person name="Minx P."/>
            <person name="Bentley D."/>
            <person name="Fulton B."/>
            <person name="Miller N."/>
            <person name="Greco T."/>
            <person name="Kemp K."/>
            <person name="Kramer J."/>
            <person name="Fulton L."/>
            <person name="Mardis E."/>
            <person name="Dante M."/>
            <person name="Pepin K."/>
            <person name="Hillier L.W."/>
            <person name="Nelson J."/>
            <person name="Spieth J."/>
            <person name="Ryan E."/>
            <person name="Andrews S."/>
            <person name="Geisel C."/>
            <person name="Layman D."/>
            <person name="Du H."/>
            <person name="Ali J."/>
            <person name="Berghoff A."/>
            <person name="Jones K."/>
            <person name="Drone K."/>
            <person name="Cotton M."/>
            <person name="Joshu C."/>
            <person name="Antonoiu B."/>
            <person name="Zidanic M."/>
            <person name="Strong C."/>
            <person name="Sun H."/>
            <person name="Lamar B."/>
            <person name="Yordan C."/>
            <person name="Ma P."/>
            <person name="Zhong J."/>
            <person name="Preston R."/>
            <person name="Vil D."/>
            <person name="Shekher M."/>
            <person name="Matero A."/>
            <person name="Shah R."/>
            <person name="Swaby I.K."/>
            <person name="O'Shaughnessy A."/>
            <person name="Rodriguez M."/>
            <person name="Hoffman J."/>
            <person name="Till S."/>
            <person name="Granat S."/>
            <person name="Shohdy N."/>
            <person name="Hasegawa A."/>
            <person name="Hameed A."/>
            <person name="Lodhi M."/>
            <person name="Johnson A."/>
            <person name="Chen E."/>
            <person name="Marra M.A."/>
            <person name="Martienssen R."/>
            <person name="McCombie W.R."/>
        </authorList>
    </citation>
    <scope>NUCLEOTIDE SEQUENCE [LARGE SCALE GENOMIC DNA]</scope>
    <source>
        <strain>cv. Columbia</strain>
    </source>
</reference>
<reference key="2">
    <citation type="journal article" date="2017" name="Plant J.">
        <title>Araport11: a complete reannotation of the Arabidopsis thaliana reference genome.</title>
        <authorList>
            <person name="Cheng C.Y."/>
            <person name="Krishnakumar V."/>
            <person name="Chan A.P."/>
            <person name="Thibaud-Nissen F."/>
            <person name="Schobel S."/>
            <person name="Town C.D."/>
        </authorList>
    </citation>
    <scope>GENOME REANNOTATION</scope>
    <source>
        <strain>cv. Columbia</strain>
    </source>
</reference>
<reference key="3">
    <citation type="journal article" date="2003" name="Science">
        <title>Empirical analysis of transcriptional activity in the Arabidopsis genome.</title>
        <authorList>
            <person name="Yamada K."/>
            <person name="Lim J."/>
            <person name="Dale J.M."/>
            <person name="Chen H."/>
            <person name="Shinn P."/>
            <person name="Palm C.J."/>
            <person name="Southwick A.M."/>
            <person name="Wu H.C."/>
            <person name="Kim C.J."/>
            <person name="Nguyen M."/>
            <person name="Pham P.K."/>
            <person name="Cheuk R.F."/>
            <person name="Karlin-Newmann G."/>
            <person name="Liu S.X."/>
            <person name="Lam B."/>
            <person name="Sakano H."/>
            <person name="Wu T."/>
            <person name="Yu G."/>
            <person name="Miranda M."/>
            <person name="Quach H.L."/>
            <person name="Tripp M."/>
            <person name="Chang C.H."/>
            <person name="Lee J.M."/>
            <person name="Toriumi M.J."/>
            <person name="Chan M.M."/>
            <person name="Tang C.C."/>
            <person name="Onodera C.S."/>
            <person name="Deng J.M."/>
            <person name="Akiyama K."/>
            <person name="Ansari Y."/>
            <person name="Arakawa T."/>
            <person name="Banh J."/>
            <person name="Banno F."/>
            <person name="Bowser L."/>
            <person name="Brooks S.Y."/>
            <person name="Carninci P."/>
            <person name="Chao Q."/>
            <person name="Choy N."/>
            <person name="Enju A."/>
            <person name="Goldsmith A.D."/>
            <person name="Gurjal M."/>
            <person name="Hansen N.F."/>
            <person name="Hayashizaki Y."/>
            <person name="Johnson-Hopson C."/>
            <person name="Hsuan V.W."/>
            <person name="Iida K."/>
            <person name="Karnes M."/>
            <person name="Khan S."/>
            <person name="Koesema E."/>
            <person name="Ishida J."/>
            <person name="Jiang P.X."/>
            <person name="Jones T."/>
            <person name="Kawai J."/>
            <person name="Kamiya A."/>
            <person name="Meyers C."/>
            <person name="Nakajima M."/>
            <person name="Narusaka M."/>
            <person name="Seki M."/>
            <person name="Sakurai T."/>
            <person name="Satou M."/>
            <person name="Tamse R."/>
            <person name="Vaysberg M."/>
            <person name="Wallender E.K."/>
            <person name="Wong C."/>
            <person name="Yamamura Y."/>
            <person name="Yuan S."/>
            <person name="Shinozaki K."/>
            <person name="Davis R.W."/>
            <person name="Theologis A."/>
            <person name="Ecker J.R."/>
        </authorList>
    </citation>
    <scope>NUCLEOTIDE SEQUENCE [LARGE SCALE MRNA]</scope>
    <source>
        <strain>cv. Columbia</strain>
    </source>
</reference>
<reference key="4">
    <citation type="submission" date="2002-03" db="EMBL/GenBank/DDBJ databases">
        <title>Full-length cDNA from Arabidopsis thaliana.</title>
        <authorList>
            <person name="Brover V.V."/>
            <person name="Troukhan M.E."/>
            <person name="Alexandrov N.A."/>
            <person name="Lu Y.-P."/>
            <person name="Flavell R.B."/>
            <person name="Feldmann K.A."/>
        </authorList>
    </citation>
    <scope>NUCLEOTIDE SEQUENCE [LARGE SCALE MRNA]</scope>
</reference>
<reference key="5">
    <citation type="journal article" date="2001" name="J. Biol. Chem.">
        <title>Phylogenetic analysis of the UDP-glycosyltransferase multigene family of Arabidopsis thaliana.</title>
        <authorList>
            <person name="Li Y."/>
            <person name="Baldauf S."/>
            <person name="Lim E.K."/>
            <person name="Bowles D.J."/>
        </authorList>
    </citation>
    <scope>GENE FAMILY</scope>
</reference>
<reference key="6">
    <citation type="journal article" date="2002" name="J. Biol. Chem.">
        <title>The activity of Arabidopsis glycosyltransferases toward salicylic acid, 4-hydroxybenzoic acid, and other benzoates.</title>
        <authorList>
            <person name="Lim E.K."/>
            <person name="Doucet C.J."/>
            <person name="Li Y."/>
            <person name="Elias L."/>
            <person name="Worrall D."/>
            <person name="Spencer S.P."/>
            <person name="Ross J."/>
            <person name="Bowles D.J."/>
        </authorList>
    </citation>
    <scope>FUNCTION</scope>
</reference>
<reference key="7">
    <citation type="journal article" date="2005" name="Plant J.">
        <title>Functional importance of the family 1 glucosyltransferase UGT72B1 in the metabolism of xenobiotics in Arabidopsis thaliana.</title>
        <authorList>
            <person name="Brazier-Hicks M."/>
            <person name="Edwards R."/>
        </authorList>
    </citation>
    <scope>FUNCTION</scope>
    <scope>DISRUPTION PHENOTYPE</scope>
</reference>
<reference key="8">
    <citation type="journal article" date="2007" name="Proc. Natl. Acad. Sci. U.S.A.">
        <title>Characterization and engineering of the bifunctional N- and O-glucosyltransferase involved in xenobiotic metabolism in plants.</title>
        <authorList>
            <person name="Brazier-Hicks M."/>
            <person name="Offen W.A."/>
            <person name="Gershater M.C."/>
            <person name="Revett T.J."/>
            <person name="Lim E.K."/>
            <person name="Bowles D.J."/>
            <person name="Davies G.J."/>
            <person name="Edwards R."/>
        </authorList>
    </citation>
    <scope>X-RAY CRYSTALLOGRAPHY (1.45 ANGSTROMS) IN COMPLEXES WITH 2,4,5-TRICHLOROPHENOL; UDP AND UDP-GLUCOSE ANALOG</scope>
    <scope>FUNCTION</scope>
    <scope>BIOPHYSICOCHEMICAL PROPERTIES</scope>
    <scope>MUTAGENESIS OF SER-14; HIS-19; ASP-117; ASN-312 AND TYR-315</scope>
</reference>
<sequence length="480" mass="52930">MEESKTPHVAIIPSPGMGHLIPLVEFAKRLVHLHGLTVTFVIAGEGPPSKAQRTVLDSLPSSISSVFLPPVDLTDLSSSTRIESRISLTVTRSNPELRKVFDSFVEGGRLPTALVVDLFGTDAFDVAVEFHVPPYIFYPTTANVLSFFLHLPKLDETVSCEFRELTEPLMLPGCVPVAGKDFLDPAQDRKDDAYKWLLHNTKRYKEAEGILVNTFFELEPNAIKALQEPGLDKPPVYPVGPLVNIGKQEAKQTEESECLKWLDNQPLGSVLYVSFGSGGTLTCEQLNELALGLADSEQRFLWVIRSPSGIANSSYFDSHSQTDPLTFLPPGFLERTKKRGFVIPFWAPQAQVLAHPSTGGFLTHCGWNSTLESVVSGIPLIAWPLYAEQKMNAVLLSEDIRAALRPRAGDDGLVRREEVARVVKGLMEGEEGKGVRNKMKELKEAACRVLKDDGTSTKALSLVALKWKAHKKELEQNGNH</sequence>
<keyword id="KW-0002">3D-structure</keyword>
<keyword id="KW-0025">Alternative splicing</keyword>
<keyword id="KW-0216">Detoxification</keyword>
<keyword id="KW-0328">Glycosyltransferase</keyword>
<keyword id="KW-1185">Reference proteome</keyword>
<keyword id="KW-0808">Transferase</keyword>
<name>U72B1_ARATH</name>
<comment type="function">
    <text evidence="2 3 4">Bifunctional O-glycosyltransferase and N-glycosyltransferase that can detoxify xenobiotics. Possesses high activity to metabolize the persistent pollutants 2,4,5-trichlorophenol (TCP) and 3,4-dichloroaniline (DCA). Also active on benzoates and benzoate derivatives in vitro.</text>
</comment>
<comment type="catalytic activity">
    <reaction>
        <text>hydroquinone + UDP-alpha-D-glucose = hydroquinone O-beta-D-glucopyranoside + UDP + H(+)</text>
        <dbReference type="Rhea" id="RHEA:12560"/>
        <dbReference type="ChEBI" id="CHEBI:15378"/>
        <dbReference type="ChEBI" id="CHEBI:17594"/>
        <dbReference type="ChEBI" id="CHEBI:18305"/>
        <dbReference type="ChEBI" id="CHEBI:58223"/>
        <dbReference type="ChEBI" id="CHEBI:58885"/>
        <dbReference type="EC" id="2.4.1.218"/>
    </reaction>
</comment>
<comment type="biophysicochemical properties">
    <kinetics>
        <KM evidence="4">34.3 uM for 3,4-dichlorophenol</KM>
        <KM evidence="4">16.5 uM for 3,4-dichloroaniline</KM>
    </kinetics>
</comment>
<comment type="alternative products">
    <event type="alternative splicing"/>
    <isoform>
        <id>Q9M156-1</id>
        <name>1</name>
        <sequence type="displayed"/>
    </isoform>
    <text>A number of isoforms are produced. According to EST sequences.</text>
</comment>
<comment type="disruption phenotype">
    <text evidence="3">No visible phenotype under normal growth condition.</text>
</comment>
<comment type="similarity">
    <text evidence="5">Belongs to the UDP-glycosyltransferase family.</text>
</comment>
<comment type="sequence caution" evidence="5">
    <conflict type="erroneous gene model prediction">
        <sequence resource="EMBL-CDS" id="AAB61023"/>
    </conflict>
</comment>
<dbReference type="EC" id="2.4.1.-"/>
<dbReference type="EC" id="2.4.1.218"/>
<dbReference type="EMBL" id="AF007269">
    <property type="protein sequence ID" value="AAB61023.1"/>
    <property type="status" value="ALT_SEQ"/>
    <property type="molecule type" value="Genomic_DNA"/>
</dbReference>
<dbReference type="EMBL" id="AL161491">
    <property type="protein sequence ID" value="CAB80916.1"/>
    <property type="molecule type" value="Genomic_DNA"/>
</dbReference>
<dbReference type="EMBL" id="CP002687">
    <property type="protein sequence ID" value="AEE81977.1"/>
    <property type="molecule type" value="Genomic_DNA"/>
</dbReference>
<dbReference type="EMBL" id="AF360262">
    <property type="protein sequence ID" value="AAK25972.1"/>
    <property type="molecule type" value="mRNA"/>
</dbReference>
<dbReference type="EMBL" id="AY040075">
    <property type="protein sequence ID" value="AAK64133.1"/>
    <property type="molecule type" value="mRNA"/>
</dbReference>
<dbReference type="EMBL" id="AY084892">
    <property type="protein sequence ID" value="AAM61455.1"/>
    <property type="molecule type" value="mRNA"/>
</dbReference>
<dbReference type="PIR" id="B85014">
    <property type="entry name" value="B85014"/>
</dbReference>
<dbReference type="PIR" id="T01732">
    <property type="entry name" value="T01732"/>
</dbReference>
<dbReference type="RefSeq" id="NP_192016.1">
    <molecule id="Q9M156-1"/>
    <property type="nucleotide sequence ID" value="NM_116337.3"/>
</dbReference>
<dbReference type="PDB" id="2VCE">
    <property type="method" value="X-ray"/>
    <property type="resolution" value="1.90 A"/>
    <property type="chains" value="A=1-480"/>
</dbReference>
<dbReference type="PDB" id="2VCH">
    <property type="method" value="X-ray"/>
    <property type="resolution" value="1.45 A"/>
    <property type="chains" value="A=1-480"/>
</dbReference>
<dbReference type="PDB" id="2VG8">
    <property type="method" value="X-ray"/>
    <property type="resolution" value="1.75 A"/>
    <property type="chains" value="A=1-480"/>
</dbReference>
<dbReference type="PDBsum" id="2VCE"/>
<dbReference type="PDBsum" id="2VCH"/>
<dbReference type="PDBsum" id="2VG8"/>
<dbReference type="SMR" id="Q9M156"/>
<dbReference type="BioGRID" id="13203">
    <property type="interactions" value="1"/>
</dbReference>
<dbReference type="FunCoup" id="Q9M156">
    <property type="interactions" value="197"/>
</dbReference>
<dbReference type="STRING" id="3702.Q9M156"/>
<dbReference type="CAZy" id="GT1">
    <property type="family name" value="Glycosyltransferase Family 1"/>
</dbReference>
<dbReference type="PaxDb" id="3702-AT4G01070.1"/>
<dbReference type="ProteomicsDB" id="242611">
    <molecule id="Q9M156-1"/>
</dbReference>
<dbReference type="DNASU" id="827912"/>
<dbReference type="EnsemblPlants" id="AT4G01070.1">
    <molecule id="Q9M156-1"/>
    <property type="protein sequence ID" value="AT4G01070.1"/>
    <property type="gene ID" value="AT4G01070"/>
</dbReference>
<dbReference type="GeneID" id="827912"/>
<dbReference type="Gramene" id="AT4G01070.1">
    <molecule id="Q9M156-1"/>
    <property type="protein sequence ID" value="AT4G01070.1"/>
    <property type="gene ID" value="AT4G01070"/>
</dbReference>
<dbReference type="KEGG" id="ath:AT4G01070"/>
<dbReference type="Araport" id="AT4G01070"/>
<dbReference type="TAIR" id="AT4G01070">
    <property type="gene designation" value="GT72B1"/>
</dbReference>
<dbReference type="eggNOG" id="KOG1192">
    <property type="taxonomic scope" value="Eukaryota"/>
</dbReference>
<dbReference type="HOGENOM" id="CLU_001724_3_2_1"/>
<dbReference type="InParanoid" id="Q9M156"/>
<dbReference type="PhylomeDB" id="Q9M156"/>
<dbReference type="SABIO-RK" id="Q9M156"/>
<dbReference type="EvolutionaryTrace" id="Q9M156"/>
<dbReference type="PRO" id="PR:Q9M156"/>
<dbReference type="Proteomes" id="UP000006548">
    <property type="component" value="Chromosome 4"/>
</dbReference>
<dbReference type="ExpressionAtlas" id="Q9M156">
    <property type="expression patterns" value="baseline and differential"/>
</dbReference>
<dbReference type="GO" id="GO:0050505">
    <property type="term" value="F:hydroquinone glucosyltransferase activity"/>
    <property type="evidence" value="ECO:0007669"/>
    <property type="project" value="UniProtKB-EC"/>
</dbReference>
<dbReference type="GO" id="GO:0035251">
    <property type="term" value="F:UDP-glucosyltransferase activity"/>
    <property type="evidence" value="ECO:0000314"/>
    <property type="project" value="TAIR"/>
</dbReference>
<dbReference type="GO" id="GO:0008194">
    <property type="term" value="F:UDP-glycosyltransferase activity"/>
    <property type="evidence" value="ECO:0000314"/>
    <property type="project" value="TAIR"/>
</dbReference>
<dbReference type="GO" id="GO:0009809">
    <property type="term" value="P:lignin biosynthetic process"/>
    <property type="evidence" value="ECO:0000315"/>
    <property type="project" value="TAIR"/>
</dbReference>
<dbReference type="GO" id="GO:0009636">
    <property type="term" value="P:response to toxic substance"/>
    <property type="evidence" value="ECO:0000314"/>
    <property type="project" value="TAIR"/>
</dbReference>
<dbReference type="GO" id="GO:0042178">
    <property type="term" value="P:xenobiotic catabolic process"/>
    <property type="evidence" value="ECO:0000314"/>
    <property type="project" value="TAIR"/>
</dbReference>
<dbReference type="GO" id="GO:0006805">
    <property type="term" value="P:xenobiotic metabolic process"/>
    <property type="evidence" value="ECO:0000315"/>
    <property type="project" value="TAIR"/>
</dbReference>
<dbReference type="CDD" id="cd03784">
    <property type="entry name" value="GT1_Gtf-like"/>
    <property type="match status" value="1"/>
</dbReference>
<dbReference type="FunFam" id="3.40.50.2000:FF:000051">
    <property type="entry name" value="Glycosyltransferase"/>
    <property type="match status" value="1"/>
</dbReference>
<dbReference type="FunFam" id="3.40.50.2000:FF:000054">
    <property type="entry name" value="Glycosyltransferase"/>
    <property type="match status" value="1"/>
</dbReference>
<dbReference type="Gene3D" id="3.40.50.2000">
    <property type="entry name" value="Glycogen Phosphorylase B"/>
    <property type="match status" value="2"/>
</dbReference>
<dbReference type="InterPro" id="IPR002213">
    <property type="entry name" value="UDP_glucos_trans"/>
</dbReference>
<dbReference type="InterPro" id="IPR035595">
    <property type="entry name" value="UDP_glycos_trans_CS"/>
</dbReference>
<dbReference type="PANTHER" id="PTHR48046:SF6">
    <property type="entry name" value="GLYCOSYLTRANSFERASE"/>
    <property type="match status" value="1"/>
</dbReference>
<dbReference type="PANTHER" id="PTHR48046">
    <property type="entry name" value="UDP-GLYCOSYLTRANSFERASE 72E1"/>
    <property type="match status" value="1"/>
</dbReference>
<dbReference type="Pfam" id="PF00201">
    <property type="entry name" value="UDPGT"/>
    <property type="match status" value="1"/>
</dbReference>
<dbReference type="SUPFAM" id="SSF53756">
    <property type="entry name" value="UDP-Glycosyltransferase/glycogen phosphorylase"/>
    <property type="match status" value="1"/>
</dbReference>
<dbReference type="PROSITE" id="PS00375">
    <property type="entry name" value="UDPGT"/>
    <property type="match status" value="1"/>
</dbReference>
<protein>
    <recommendedName>
        <fullName>UDP-glycosyltransferase 72B1</fullName>
        <ecNumber>2.4.1.-</ecNumber>
    </recommendedName>
    <alternativeName>
        <fullName>Arbutin synthase</fullName>
    </alternativeName>
    <alternativeName>
        <fullName>Probable hydroquinone glucosyltransferase</fullName>
        <ecNumber>2.4.1.218</ecNumber>
    </alternativeName>
</protein>
<proteinExistence type="evidence at protein level"/>
<evidence type="ECO:0000250" key="1">
    <source>
        <dbReference type="UniProtKB" id="A0A0A1HA03"/>
    </source>
</evidence>
<evidence type="ECO:0000269" key="2">
    <source>
    </source>
</evidence>
<evidence type="ECO:0000269" key="3">
    <source>
    </source>
</evidence>
<evidence type="ECO:0000269" key="4">
    <source>
    </source>
</evidence>
<evidence type="ECO:0000305" key="5"/>
<evidence type="ECO:0000305" key="6">
    <source>
    </source>
</evidence>
<evidence type="ECO:0007744" key="7">
    <source>
        <dbReference type="PDB" id="2VCE"/>
    </source>
</evidence>
<evidence type="ECO:0007744" key="8">
    <source>
        <dbReference type="PDB" id="2VCH"/>
    </source>
</evidence>
<evidence type="ECO:0007744" key="9">
    <source>
        <dbReference type="PDB" id="2VG8"/>
    </source>
</evidence>
<evidence type="ECO:0007829" key="10">
    <source>
        <dbReference type="PDB" id="2VCH"/>
    </source>
</evidence>